<proteinExistence type="inferred from homology"/>
<comment type="function">
    <text evidence="1">Involved in unsaturated fatty acids biosynthesis. Catalyzes the dehydration of short chain beta-hydroxyacyl-ACPs and long chain saturated and unsaturated beta-hydroxyacyl-ACPs.</text>
</comment>
<comment type="catalytic activity">
    <reaction evidence="1">
        <text>a (3R)-hydroxyacyl-[ACP] = a (2E)-enoyl-[ACP] + H2O</text>
        <dbReference type="Rhea" id="RHEA:13097"/>
        <dbReference type="Rhea" id="RHEA-COMP:9925"/>
        <dbReference type="Rhea" id="RHEA-COMP:9945"/>
        <dbReference type="ChEBI" id="CHEBI:15377"/>
        <dbReference type="ChEBI" id="CHEBI:78784"/>
        <dbReference type="ChEBI" id="CHEBI:78827"/>
        <dbReference type="EC" id="4.2.1.59"/>
    </reaction>
</comment>
<comment type="subcellular location">
    <subcellularLocation>
        <location evidence="1">Cytoplasm</location>
    </subcellularLocation>
</comment>
<comment type="similarity">
    <text evidence="1">Belongs to the thioester dehydratase family. FabZ subfamily.</text>
</comment>
<evidence type="ECO:0000255" key="1">
    <source>
        <dbReference type="HAMAP-Rule" id="MF_00406"/>
    </source>
</evidence>
<reference key="1">
    <citation type="submission" date="2007-12" db="EMBL/GenBank/DDBJ databases">
        <title>Brucella suis ATCC 23445 whole genome shotgun sequencing project.</title>
        <authorList>
            <person name="Setubal J.C."/>
            <person name="Bowns C."/>
            <person name="Boyle S."/>
            <person name="Crasta O.R."/>
            <person name="Czar M.J."/>
            <person name="Dharmanolla C."/>
            <person name="Gillespie J.J."/>
            <person name="Kenyon R.W."/>
            <person name="Lu J."/>
            <person name="Mane S."/>
            <person name="Mohapatra S."/>
            <person name="Nagrani S."/>
            <person name="Purkayastha A."/>
            <person name="Rajasimha H.K."/>
            <person name="Shallom J.M."/>
            <person name="Shallom S."/>
            <person name="Shukla M."/>
            <person name="Snyder E.E."/>
            <person name="Sobral B.W."/>
            <person name="Wattam A.R."/>
            <person name="Will R."/>
            <person name="Williams K."/>
            <person name="Yoo H."/>
            <person name="Bruce D."/>
            <person name="Detter C."/>
            <person name="Munk C."/>
            <person name="Brettin T.S."/>
        </authorList>
    </citation>
    <scope>NUCLEOTIDE SEQUENCE [LARGE SCALE GENOMIC DNA]</scope>
    <source>
        <strain>ATCC 23445 / NCTC 10510</strain>
    </source>
</reference>
<dbReference type="EC" id="4.2.1.59" evidence="1"/>
<dbReference type="EMBL" id="CP000911">
    <property type="protein sequence ID" value="ABY38251.1"/>
    <property type="molecule type" value="Genomic_DNA"/>
</dbReference>
<dbReference type="RefSeq" id="WP_004688426.1">
    <property type="nucleotide sequence ID" value="NC_010169.1"/>
</dbReference>
<dbReference type="SMR" id="B0CGV0"/>
<dbReference type="GeneID" id="55590834"/>
<dbReference type="KEGG" id="bmt:BSUIS_A1200"/>
<dbReference type="HOGENOM" id="CLU_078912_1_2_5"/>
<dbReference type="Proteomes" id="UP000008545">
    <property type="component" value="Chromosome I"/>
</dbReference>
<dbReference type="GO" id="GO:0005737">
    <property type="term" value="C:cytoplasm"/>
    <property type="evidence" value="ECO:0007669"/>
    <property type="project" value="UniProtKB-SubCell"/>
</dbReference>
<dbReference type="GO" id="GO:0016020">
    <property type="term" value="C:membrane"/>
    <property type="evidence" value="ECO:0007669"/>
    <property type="project" value="GOC"/>
</dbReference>
<dbReference type="GO" id="GO:0019171">
    <property type="term" value="F:(3R)-hydroxyacyl-[acyl-carrier-protein] dehydratase activity"/>
    <property type="evidence" value="ECO:0007669"/>
    <property type="project" value="UniProtKB-EC"/>
</dbReference>
<dbReference type="GO" id="GO:0006633">
    <property type="term" value="P:fatty acid biosynthetic process"/>
    <property type="evidence" value="ECO:0007669"/>
    <property type="project" value="UniProtKB-UniRule"/>
</dbReference>
<dbReference type="GO" id="GO:0009245">
    <property type="term" value="P:lipid A biosynthetic process"/>
    <property type="evidence" value="ECO:0007669"/>
    <property type="project" value="UniProtKB-UniRule"/>
</dbReference>
<dbReference type="CDD" id="cd01288">
    <property type="entry name" value="FabZ"/>
    <property type="match status" value="1"/>
</dbReference>
<dbReference type="FunFam" id="3.10.129.10:FF:000001">
    <property type="entry name" value="3-hydroxyacyl-[acyl-carrier-protein] dehydratase FabZ"/>
    <property type="match status" value="1"/>
</dbReference>
<dbReference type="Gene3D" id="3.10.129.10">
    <property type="entry name" value="Hotdog Thioesterase"/>
    <property type="match status" value="1"/>
</dbReference>
<dbReference type="HAMAP" id="MF_00406">
    <property type="entry name" value="FabZ"/>
    <property type="match status" value="1"/>
</dbReference>
<dbReference type="InterPro" id="IPR013114">
    <property type="entry name" value="FabA_FabZ"/>
</dbReference>
<dbReference type="InterPro" id="IPR010084">
    <property type="entry name" value="FabZ"/>
</dbReference>
<dbReference type="InterPro" id="IPR029069">
    <property type="entry name" value="HotDog_dom_sf"/>
</dbReference>
<dbReference type="NCBIfam" id="TIGR01750">
    <property type="entry name" value="fabZ"/>
    <property type="match status" value="1"/>
</dbReference>
<dbReference type="NCBIfam" id="NF000582">
    <property type="entry name" value="PRK00006.1"/>
    <property type="match status" value="1"/>
</dbReference>
<dbReference type="PANTHER" id="PTHR30272">
    <property type="entry name" value="3-HYDROXYACYL-[ACYL-CARRIER-PROTEIN] DEHYDRATASE"/>
    <property type="match status" value="1"/>
</dbReference>
<dbReference type="PANTHER" id="PTHR30272:SF1">
    <property type="entry name" value="3-HYDROXYACYL-[ACYL-CARRIER-PROTEIN] DEHYDRATASE"/>
    <property type="match status" value="1"/>
</dbReference>
<dbReference type="Pfam" id="PF07977">
    <property type="entry name" value="FabA"/>
    <property type="match status" value="1"/>
</dbReference>
<dbReference type="SUPFAM" id="SSF54637">
    <property type="entry name" value="Thioesterase/thiol ester dehydrase-isomerase"/>
    <property type="match status" value="1"/>
</dbReference>
<feature type="chain" id="PRO_1000080435" description="3-hydroxyacyl-[acyl-carrier-protein] dehydratase FabZ">
    <location>
        <begin position="1"/>
        <end position="157"/>
    </location>
</feature>
<feature type="active site" evidence="1">
    <location>
        <position position="58"/>
    </location>
</feature>
<gene>
    <name evidence="1" type="primary">fabZ</name>
    <name type="ordered locus">BSUIS_A1200</name>
</gene>
<keyword id="KW-0963">Cytoplasm</keyword>
<keyword id="KW-0441">Lipid A biosynthesis</keyword>
<keyword id="KW-0444">Lipid biosynthesis</keyword>
<keyword id="KW-0443">Lipid metabolism</keyword>
<keyword id="KW-0456">Lyase</keyword>
<protein>
    <recommendedName>
        <fullName evidence="1">3-hydroxyacyl-[acyl-carrier-protein] dehydratase FabZ</fullName>
        <ecNumber evidence="1">4.2.1.59</ecNumber>
    </recommendedName>
    <alternativeName>
        <fullName evidence="1">(3R)-hydroxymyristoyl-[acyl-carrier-protein] dehydratase</fullName>
        <shortName evidence="1">(3R)-hydroxymyristoyl-ACP dehydrase</shortName>
    </alternativeName>
    <alternativeName>
        <fullName evidence="1">Beta-hydroxyacyl-ACP dehydratase</fullName>
    </alternativeName>
</protein>
<accession>B0CGV0</accession>
<organism>
    <name type="scientific">Brucella suis (strain ATCC 23445 / NCTC 10510)</name>
    <dbReference type="NCBI Taxonomy" id="470137"/>
    <lineage>
        <taxon>Bacteria</taxon>
        <taxon>Pseudomonadati</taxon>
        <taxon>Pseudomonadota</taxon>
        <taxon>Alphaproteobacteria</taxon>
        <taxon>Hyphomicrobiales</taxon>
        <taxon>Brucellaceae</taxon>
        <taxon>Brucella/Ochrobactrum group</taxon>
        <taxon>Brucella</taxon>
    </lineage>
</organism>
<name>FABZ_BRUSI</name>
<sequence>MSDDNQTKLEAADIQALLAVLPHRYPFLLIDRIVDIDGDVSATGIKNVTINEPHFTGHFPENPIMPGVLIVEAMAQTAGAISLLQRKTGRPGVVYFMTIDNAKFRRPVVPGDRLLLHVKKIKQRANISKYECVAEVDGVKVAEAEVAAMISVADENL</sequence>